<organism>
    <name type="scientific">Marinomonas sp. (strain MWYL1)</name>
    <dbReference type="NCBI Taxonomy" id="400668"/>
    <lineage>
        <taxon>Bacteria</taxon>
        <taxon>Pseudomonadati</taxon>
        <taxon>Pseudomonadota</taxon>
        <taxon>Gammaproteobacteria</taxon>
        <taxon>Oceanospirillales</taxon>
        <taxon>Oceanospirillaceae</taxon>
        <taxon>Marinomonas</taxon>
    </lineage>
</organism>
<proteinExistence type="inferred from homology"/>
<feature type="chain" id="PRO_1000076102" description="Elongation factor Tu">
    <location>
        <begin position="1"/>
        <end position="407"/>
    </location>
</feature>
<feature type="domain" description="tr-type G">
    <location>
        <begin position="10"/>
        <end position="217"/>
    </location>
</feature>
<feature type="region of interest" description="G1" evidence="1">
    <location>
        <begin position="19"/>
        <end position="26"/>
    </location>
</feature>
<feature type="region of interest" description="G2" evidence="1">
    <location>
        <begin position="60"/>
        <end position="64"/>
    </location>
</feature>
<feature type="region of interest" description="G3" evidence="1">
    <location>
        <begin position="81"/>
        <end position="84"/>
    </location>
</feature>
<feature type="region of interest" description="G4" evidence="1">
    <location>
        <begin position="136"/>
        <end position="139"/>
    </location>
</feature>
<feature type="region of interest" description="G5" evidence="1">
    <location>
        <begin position="184"/>
        <end position="186"/>
    </location>
</feature>
<feature type="binding site" evidence="2">
    <location>
        <begin position="19"/>
        <end position="26"/>
    </location>
    <ligand>
        <name>GTP</name>
        <dbReference type="ChEBI" id="CHEBI:37565"/>
    </ligand>
</feature>
<feature type="binding site" evidence="2">
    <location>
        <position position="26"/>
    </location>
    <ligand>
        <name>Mg(2+)</name>
        <dbReference type="ChEBI" id="CHEBI:18420"/>
    </ligand>
</feature>
<feature type="binding site" evidence="2">
    <location>
        <begin position="81"/>
        <end position="85"/>
    </location>
    <ligand>
        <name>GTP</name>
        <dbReference type="ChEBI" id="CHEBI:37565"/>
    </ligand>
</feature>
<feature type="binding site" evidence="2">
    <location>
        <begin position="136"/>
        <end position="139"/>
    </location>
    <ligand>
        <name>GTP</name>
        <dbReference type="ChEBI" id="CHEBI:37565"/>
    </ligand>
</feature>
<name>EFTU_MARMS</name>
<evidence type="ECO:0000250" key="1"/>
<evidence type="ECO:0000255" key="2">
    <source>
        <dbReference type="HAMAP-Rule" id="MF_00118"/>
    </source>
</evidence>
<sequence length="407" mass="44330">MAKSKFERNKPHVNVGTIGHVDHGKTTLTAALTRVCAEVFGGTAVAFDGIDNAPEERERGITISTSHVEYDSPTRHYAHVDCPGHADYVKNMITGAAQMDGAILVCGATDGPMPQTREHILLSRQVGVPYIVVFLNKSDLLADDCGGADSEEYAEMLELVEMELRDLLSEYDFPGDDTPIIPGSALMALKGEDDNEMGTTAVRKLVETLDTYIPDPERAIDGAFLMPIEDVFSIQGRGTVVTGRVERGIIKIQEEVEIVGIVDTTKTTCTGVEMFRKLLDEGRAGENCGILLRGTKREDVQRGQVLAKPGSITPHTQFEAEVYVLGKDEGGRHTPFFKGYRPQFYFRTTDVTGACSLPEGVEMVMPGDNIQMTVELIHPIAMDEGLRFAIREGGRTVGAGVVAKILK</sequence>
<protein>
    <recommendedName>
        <fullName evidence="2">Elongation factor Tu</fullName>
        <shortName evidence="2">EF-Tu</shortName>
        <ecNumber evidence="2">3.6.5.3</ecNumber>
    </recommendedName>
</protein>
<reference key="1">
    <citation type="submission" date="2007-06" db="EMBL/GenBank/DDBJ databases">
        <title>Complete sequence of Marinomonas sp. MWYL1.</title>
        <authorList>
            <consortium name="US DOE Joint Genome Institute"/>
            <person name="Copeland A."/>
            <person name="Lucas S."/>
            <person name="Lapidus A."/>
            <person name="Barry K."/>
            <person name="Glavina del Rio T."/>
            <person name="Dalin E."/>
            <person name="Tice H."/>
            <person name="Pitluck S."/>
            <person name="Kiss H."/>
            <person name="Brettin T."/>
            <person name="Bruce D."/>
            <person name="Detter J.C."/>
            <person name="Han C."/>
            <person name="Schmutz J."/>
            <person name="Larimer F."/>
            <person name="Land M."/>
            <person name="Hauser L."/>
            <person name="Kyrpides N."/>
            <person name="Kim E."/>
            <person name="Johnston A.W.B."/>
            <person name="Todd J.D."/>
            <person name="Rogers R."/>
            <person name="Wexler M."/>
            <person name="Bond P.L."/>
            <person name="Li Y."/>
            <person name="Richardson P."/>
        </authorList>
    </citation>
    <scope>NUCLEOTIDE SEQUENCE [LARGE SCALE GENOMIC DNA]</scope>
    <source>
        <strain>MWYL1</strain>
    </source>
</reference>
<keyword id="KW-0963">Cytoplasm</keyword>
<keyword id="KW-0251">Elongation factor</keyword>
<keyword id="KW-0342">GTP-binding</keyword>
<keyword id="KW-0378">Hydrolase</keyword>
<keyword id="KW-0460">Magnesium</keyword>
<keyword id="KW-0479">Metal-binding</keyword>
<keyword id="KW-0547">Nucleotide-binding</keyword>
<keyword id="KW-0648">Protein biosynthesis</keyword>
<dbReference type="EC" id="3.6.5.3" evidence="2"/>
<dbReference type="EMBL" id="CP000749">
    <property type="protein sequence ID" value="ABR73173.1"/>
    <property type="molecule type" value="Genomic_DNA"/>
</dbReference>
<dbReference type="SMR" id="A6W394"/>
<dbReference type="STRING" id="400668.Mmwyl1_4278"/>
<dbReference type="KEGG" id="mmw:Mmwyl1_4278"/>
<dbReference type="eggNOG" id="COG0050">
    <property type="taxonomic scope" value="Bacteria"/>
</dbReference>
<dbReference type="HOGENOM" id="CLU_007265_0_0_6"/>
<dbReference type="OrthoDB" id="9803139at2"/>
<dbReference type="GO" id="GO:0005829">
    <property type="term" value="C:cytosol"/>
    <property type="evidence" value="ECO:0007669"/>
    <property type="project" value="TreeGrafter"/>
</dbReference>
<dbReference type="GO" id="GO:0005525">
    <property type="term" value="F:GTP binding"/>
    <property type="evidence" value="ECO:0007669"/>
    <property type="project" value="UniProtKB-UniRule"/>
</dbReference>
<dbReference type="GO" id="GO:0003924">
    <property type="term" value="F:GTPase activity"/>
    <property type="evidence" value="ECO:0007669"/>
    <property type="project" value="InterPro"/>
</dbReference>
<dbReference type="GO" id="GO:0097216">
    <property type="term" value="F:guanosine tetraphosphate binding"/>
    <property type="evidence" value="ECO:0007669"/>
    <property type="project" value="UniProtKB-ARBA"/>
</dbReference>
<dbReference type="GO" id="GO:0003746">
    <property type="term" value="F:translation elongation factor activity"/>
    <property type="evidence" value="ECO:0007669"/>
    <property type="project" value="UniProtKB-UniRule"/>
</dbReference>
<dbReference type="CDD" id="cd01884">
    <property type="entry name" value="EF_Tu"/>
    <property type="match status" value="1"/>
</dbReference>
<dbReference type="CDD" id="cd03697">
    <property type="entry name" value="EFTU_II"/>
    <property type="match status" value="1"/>
</dbReference>
<dbReference type="CDD" id="cd03707">
    <property type="entry name" value="EFTU_III"/>
    <property type="match status" value="1"/>
</dbReference>
<dbReference type="FunFam" id="2.40.30.10:FF:000001">
    <property type="entry name" value="Elongation factor Tu"/>
    <property type="match status" value="1"/>
</dbReference>
<dbReference type="FunFam" id="3.40.50.300:FF:000003">
    <property type="entry name" value="Elongation factor Tu"/>
    <property type="match status" value="1"/>
</dbReference>
<dbReference type="Gene3D" id="3.40.50.300">
    <property type="entry name" value="P-loop containing nucleotide triphosphate hydrolases"/>
    <property type="match status" value="1"/>
</dbReference>
<dbReference type="Gene3D" id="2.40.30.10">
    <property type="entry name" value="Translation factors"/>
    <property type="match status" value="2"/>
</dbReference>
<dbReference type="HAMAP" id="MF_00118_B">
    <property type="entry name" value="EF_Tu_B"/>
    <property type="match status" value="1"/>
</dbReference>
<dbReference type="InterPro" id="IPR041709">
    <property type="entry name" value="EF-Tu_GTP-bd"/>
</dbReference>
<dbReference type="InterPro" id="IPR050055">
    <property type="entry name" value="EF-Tu_GTPase"/>
</dbReference>
<dbReference type="InterPro" id="IPR004161">
    <property type="entry name" value="EFTu-like_2"/>
</dbReference>
<dbReference type="InterPro" id="IPR033720">
    <property type="entry name" value="EFTU_2"/>
</dbReference>
<dbReference type="InterPro" id="IPR031157">
    <property type="entry name" value="G_TR_CS"/>
</dbReference>
<dbReference type="InterPro" id="IPR027417">
    <property type="entry name" value="P-loop_NTPase"/>
</dbReference>
<dbReference type="InterPro" id="IPR005225">
    <property type="entry name" value="Small_GTP-bd"/>
</dbReference>
<dbReference type="InterPro" id="IPR000795">
    <property type="entry name" value="T_Tr_GTP-bd_dom"/>
</dbReference>
<dbReference type="InterPro" id="IPR009000">
    <property type="entry name" value="Transl_B-barrel_sf"/>
</dbReference>
<dbReference type="InterPro" id="IPR009001">
    <property type="entry name" value="Transl_elong_EF1A/Init_IF2_C"/>
</dbReference>
<dbReference type="InterPro" id="IPR004541">
    <property type="entry name" value="Transl_elong_EFTu/EF1A_bac/org"/>
</dbReference>
<dbReference type="InterPro" id="IPR004160">
    <property type="entry name" value="Transl_elong_EFTu/EF1A_C"/>
</dbReference>
<dbReference type="NCBIfam" id="TIGR00485">
    <property type="entry name" value="EF-Tu"/>
    <property type="match status" value="1"/>
</dbReference>
<dbReference type="NCBIfam" id="NF000766">
    <property type="entry name" value="PRK00049.1"/>
    <property type="match status" value="1"/>
</dbReference>
<dbReference type="NCBIfam" id="NF009372">
    <property type="entry name" value="PRK12735.1"/>
    <property type="match status" value="1"/>
</dbReference>
<dbReference type="NCBIfam" id="NF009373">
    <property type="entry name" value="PRK12736.1"/>
    <property type="match status" value="1"/>
</dbReference>
<dbReference type="NCBIfam" id="TIGR00231">
    <property type="entry name" value="small_GTP"/>
    <property type="match status" value="1"/>
</dbReference>
<dbReference type="PANTHER" id="PTHR43721:SF22">
    <property type="entry name" value="ELONGATION FACTOR TU, MITOCHONDRIAL"/>
    <property type="match status" value="1"/>
</dbReference>
<dbReference type="PANTHER" id="PTHR43721">
    <property type="entry name" value="ELONGATION FACTOR TU-RELATED"/>
    <property type="match status" value="1"/>
</dbReference>
<dbReference type="Pfam" id="PF00009">
    <property type="entry name" value="GTP_EFTU"/>
    <property type="match status" value="1"/>
</dbReference>
<dbReference type="Pfam" id="PF03144">
    <property type="entry name" value="GTP_EFTU_D2"/>
    <property type="match status" value="1"/>
</dbReference>
<dbReference type="Pfam" id="PF03143">
    <property type="entry name" value="GTP_EFTU_D3"/>
    <property type="match status" value="1"/>
</dbReference>
<dbReference type="PRINTS" id="PR00315">
    <property type="entry name" value="ELONGATNFCT"/>
</dbReference>
<dbReference type="SUPFAM" id="SSF50465">
    <property type="entry name" value="EF-Tu/eEF-1alpha/eIF2-gamma C-terminal domain"/>
    <property type="match status" value="1"/>
</dbReference>
<dbReference type="SUPFAM" id="SSF52540">
    <property type="entry name" value="P-loop containing nucleoside triphosphate hydrolases"/>
    <property type="match status" value="1"/>
</dbReference>
<dbReference type="SUPFAM" id="SSF50447">
    <property type="entry name" value="Translation proteins"/>
    <property type="match status" value="1"/>
</dbReference>
<dbReference type="PROSITE" id="PS00301">
    <property type="entry name" value="G_TR_1"/>
    <property type="match status" value="1"/>
</dbReference>
<dbReference type="PROSITE" id="PS51722">
    <property type="entry name" value="G_TR_2"/>
    <property type="match status" value="1"/>
</dbReference>
<gene>
    <name evidence="2" type="primary">tuf</name>
    <name type="ordered locus">Mmwyl1_4278</name>
</gene>
<comment type="function">
    <text evidence="2">GTP hydrolase that promotes the GTP-dependent binding of aminoacyl-tRNA to the A-site of ribosomes during protein biosynthesis.</text>
</comment>
<comment type="catalytic activity">
    <reaction evidence="2">
        <text>GTP + H2O = GDP + phosphate + H(+)</text>
        <dbReference type="Rhea" id="RHEA:19669"/>
        <dbReference type="ChEBI" id="CHEBI:15377"/>
        <dbReference type="ChEBI" id="CHEBI:15378"/>
        <dbReference type="ChEBI" id="CHEBI:37565"/>
        <dbReference type="ChEBI" id="CHEBI:43474"/>
        <dbReference type="ChEBI" id="CHEBI:58189"/>
        <dbReference type="EC" id="3.6.5.3"/>
    </reaction>
    <physiologicalReaction direction="left-to-right" evidence="2">
        <dbReference type="Rhea" id="RHEA:19670"/>
    </physiologicalReaction>
</comment>
<comment type="subunit">
    <text evidence="2">Monomer.</text>
</comment>
<comment type="subcellular location">
    <subcellularLocation>
        <location evidence="2">Cytoplasm</location>
    </subcellularLocation>
</comment>
<comment type="similarity">
    <text evidence="2">Belongs to the TRAFAC class translation factor GTPase superfamily. Classic translation factor GTPase family. EF-Tu/EF-1A subfamily.</text>
</comment>
<accession>A6W394</accession>